<organism>
    <name type="scientific">Anaeromyxobacter dehalogenans (strain 2CP-1 / ATCC BAA-258)</name>
    <dbReference type="NCBI Taxonomy" id="455488"/>
    <lineage>
        <taxon>Bacteria</taxon>
        <taxon>Pseudomonadati</taxon>
        <taxon>Myxococcota</taxon>
        <taxon>Myxococcia</taxon>
        <taxon>Myxococcales</taxon>
        <taxon>Cystobacterineae</taxon>
        <taxon>Anaeromyxobacteraceae</taxon>
        <taxon>Anaeromyxobacter</taxon>
    </lineage>
</organism>
<reference key="1">
    <citation type="submission" date="2009-01" db="EMBL/GenBank/DDBJ databases">
        <title>Complete sequence of Anaeromyxobacter dehalogenans 2CP-1.</title>
        <authorList>
            <person name="Lucas S."/>
            <person name="Copeland A."/>
            <person name="Lapidus A."/>
            <person name="Glavina del Rio T."/>
            <person name="Dalin E."/>
            <person name="Tice H."/>
            <person name="Bruce D."/>
            <person name="Goodwin L."/>
            <person name="Pitluck S."/>
            <person name="Saunders E."/>
            <person name="Brettin T."/>
            <person name="Detter J.C."/>
            <person name="Han C."/>
            <person name="Larimer F."/>
            <person name="Land M."/>
            <person name="Hauser L."/>
            <person name="Kyrpides N."/>
            <person name="Ovchinnikova G."/>
            <person name="Beliaev A.S."/>
            <person name="Richardson P."/>
        </authorList>
    </citation>
    <scope>NUCLEOTIDE SEQUENCE [LARGE SCALE GENOMIC DNA]</scope>
    <source>
        <strain>2CP-1 / ATCC BAA-258</strain>
    </source>
</reference>
<protein>
    <recommendedName>
        <fullName evidence="1">Holo-[acyl-carrier-protein] synthase</fullName>
        <shortName evidence="1">Holo-ACP synthase</shortName>
        <ecNumber evidence="1">2.7.8.7</ecNumber>
    </recommendedName>
    <alternativeName>
        <fullName evidence="1">4'-phosphopantetheinyl transferase AcpS</fullName>
    </alternativeName>
</protein>
<proteinExistence type="inferred from homology"/>
<accession>B8JBG5</accession>
<dbReference type="EC" id="2.7.8.7" evidence="1"/>
<dbReference type="EMBL" id="CP001359">
    <property type="protein sequence ID" value="ACL65792.1"/>
    <property type="molecule type" value="Genomic_DNA"/>
</dbReference>
<dbReference type="RefSeq" id="WP_012633593.1">
    <property type="nucleotide sequence ID" value="NC_011891.1"/>
</dbReference>
<dbReference type="SMR" id="B8JBG5"/>
<dbReference type="KEGG" id="acp:A2cp1_2454"/>
<dbReference type="HOGENOM" id="CLU_089696_0_0_7"/>
<dbReference type="Proteomes" id="UP000007089">
    <property type="component" value="Chromosome"/>
</dbReference>
<dbReference type="GO" id="GO:0005737">
    <property type="term" value="C:cytoplasm"/>
    <property type="evidence" value="ECO:0007669"/>
    <property type="project" value="UniProtKB-SubCell"/>
</dbReference>
<dbReference type="GO" id="GO:0008897">
    <property type="term" value="F:holo-[acyl-carrier-protein] synthase activity"/>
    <property type="evidence" value="ECO:0007669"/>
    <property type="project" value="UniProtKB-UniRule"/>
</dbReference>
<dbReference type="GO" id="GO:0000287">
    <property type="term" value="F:magnesium ion binding"/>
    <property type="evidence" value="ECO:0007669"/>
    <property type="project" value="UniProtKB-UniRule"/>
</dbReference>
<dbReference type="GO" id="GO:0006633">
    <property type="term" value="P:fatty acid biosynthetic process"/>
    <property type="evidence" value="ECO:0007669"/>
    <property type="project" value="UniProtKB-UniRule"/>
</dbReference>
<dbReference type="Gene3D" id="3.90.470.20">
    <property type="entry name" value="4'-phosphopantetheinyl transferase domain"/>
    <property type="match status" value="1"/>
</dbReference>
<dbReference type="HAMAP" id="MF_00101">
    <property type="entry name" value="AcpS"/>
    <property type="match status" value="1"/>
</dbReference>
<dbReference type="InterPro" id="IPR008278">
    <property type="entry name" value="4-PPantetheinyl_Trfase_dom"/>
</dbReference>
<dbReference type="InterPro" id="IPR037143">
    <property type="entry name" value="4-PPantetheinyl_Trfase_dom_sf"/>
</dbReference>
<dbReference type="InterPro" id="IPR002582">
    <property type="entry name" value="ACPS"/>
</dbReference>
<dbReference type="InterPro" id="IPR004568">
    <property type="entry name" value="Ppantetheine-prot_Trfase_dom"/>
</dbReference>
<dbReference type="NCBIfam" id="TIGR00516">
    <property type="entry name" value="acpS"/>
    <property type="match status" value="1"/>
</dbReference>
<dbReference type="NCBIfam" id="TIGR00556">
    <property type="entry name" value="pantethn_trn"/>
    <property type="match status" value="1"/>
</dbReference>
<dbReference type="NCBIfam" id="NF000832">
    <property type="entry name" value="PRK00070.3-2"/>
    <property type="match status" value="1"/>
</dbReference>
<dbReference type="Pfam" id="PF01648">
    <property type="entry name" value="ACPS"/>
    <property type="match status" value="1"/>
</dbReference>
<dbReference type="SUPFAM" id="SSF56214">
    <property type="entry name" value="4'-phosphopantetheinyl transferase"/>
    <property type="match status" value="1"/>
</dbReference>
<comment type="function">
    <text evidence="1">Transfers the 4'-phosphopantetheine moiety from coenzyme A to a Ser of acyl-carrier-protein.</text>
</comment>
<comment type="catalytic activity">
    <reaction evidence="1">
        <text>apo-[ACP] + CoA = holo-[ACP] + adenosine 3',5'-bisphosphate + H(+)</text>
        <dbReference type="Rhea" id="RHEA:12068"/>
        <dbReference type="Rhea" id="RHEA-COMP:9685"/>
        <dbReference type="Rhea" id="RHEA-COMP:9690"/>
        <dbReference type="ChEBI" id="CHEBI:15378"/>
        <dbReference type="ChEBI" id="CHEBI:29999"/>
        <dbReference type="ChEBI" id="CHEBI:57287"/>
        <dbReference type="ChEBI" id="CHEBI:58343"/>
        <dbReference type="ChEBI" id="CHEBI:64479"/>
        <dbReference type="EC" id="2.7.8.7"/>
    </reaction>
</comment>
<comment type="cofactor">
    <cofactor evidence="1">
        <name>Mg(2+)</name>
        <dbReference type="ChEBI" id="CHEBI:18420"/>
    </cofactor>
</comment>
<comment type="subcellular location">
    <subcellularLocation>
        <location evidence="1">Cytoplasm</location>
    </subcellularLocation>
</comment>
<comment type="similarity">
    <text evidence="1">Belongs to the P-Pant transferase superfamily. AcpS family.</text>
</comment>
<gene>
    <name evidence="1" type="primary">acpS</name>
    <name type="ordered locus">A2cp1_2454</name>
</gene>
<feature type="chain" id="PRO_1000118786" description="Holo-[acyl-carrier-protein] synthase">
    <location>
        <begin position="1"/>
        <end position="128"/>
    </location>
</feature>
<feature type="binding site" evidence="1">
    <location>
        <position position="8"/>
    </location>
    <ligand>
        <name>Mg(2+)</name>
        <dbReference type="ChEBI" id="CHEBI:18420"/>
    </ligand>
</feature>
<feature type="binding site" evidence="1">
    <location>
        <position position="60"/>
    </location>
    <ligand>
        <name>Mg(2+)</name>
        <dbReference type="ChEBI" id="CHEBI:18420"/>
    </ligand>
</feature>
<evidence type="ECO:0000255" key="1">
    <source>
        <dbReference type="HAMAP-Rule" id="MF_00101"/>
    </source>
</evidence>
<name>ACPS_ANAD2</name>
<sequence>MILGLGLDVVEVARIQRILAGPPARAERFLARVFAPAERAYCDARQDRATRYAARFAAKEAAVKALGTPEGVRWLDLVVERGGGAPSLVLDGIAADAARRLGVARVHLTLTHDGGVAVAAVILEGTGP</sequence>
<keyword id="KW-0963">Cytoplasm</keyword>
<keyword id="KW-0275">Fatty acid biosynthesis</keyword>
<keyword id="KW-0276">Fatty acid metabolism</keyword>
<keyword id="KW-0444">Lipid biosynthesis</keyword>
<keyword id="KW-0443">Lipid metabolism</keyword>
<keyword id="KW-0460">Magnesium</keyword>
<keyword id="KW-0479">Metal-binding</keyword>
<keyword id="KW-0808">Transferase</keyword>